<dbReference type="EMBL" id="AP003453">
    <property type="status" value="NOT_ANNOTATED_CDS"/>
    <property type="molecule type" value="Genomic_DNA"/>
</dbReference>
<dbReference type="EMBL" id="AP008207">
    <property type="protein sequence ID" value="BAF06000.2"/>
    <property type="status" value="ALT_SEQ"/>
    <property type="molecule type" value="Genomic_DNA"/>
</dbReference>
<dbReference type="EMBL" id="AP014957">
    <property type="status" value="NOT_ANNOTATED_CDS"/>
    <property type="molecule type" value="Genomic_DNA"/>
</dbReference>
<dbReference type="EMBL" id="CM000138">
    <property type="protein sequence ID" value="EAZ13354.1"/>
    <property type="status" value="ALT_SEQ"/>
    <property type="molecule type" value="Genomic_DNA"/>
</dbReference>
<dbReference type="RefSeq" id="XP_015648208.1">
    <property type="nucleotide sequence ID" value="XM_015792722.1"/>
</dbReference>
<dbReference type="SMR" id="Q0JJS8"/>
<dbReference type="BioGRID" id="793737">
    <property type="interactions" value="1"/>
</dbReference>
<dbReference type="FunCoup" id="Q0JJS8">
    <property type="interactions" value="702"/>
</dbReference>
<dbReference type="STRING" id="39947.Q0JJS8"/>
<dbReference type="PaxDb" id="39947-Q0JJS8"/>
<dbReference type="KEGG" id="dosa:Os01g0719700"/>
<dbReference type="eggNOG" id="KOG3022">
    <property type="taxonomic scope" value="Eukaryota"/>
</dbReference>
<dbReference type="InParanoid" id="Q0JJS8"/>
<dbReference type="OrthoDB" id="1741334at2759"/>
<dbReference type="Proteomes" id="UP000000763">
    <property type="component" value="Chromosome 1"/>
</dbReference>
<dbReference type="Proteomes" id="UP000007752">
    <property type="component" value="Chromosome 1"/>
</dbReference>
<dbReference type="Proteomes" id="UP000059680">
    <property type="component" value="Chromosome 1"/>
</dbReference>
<dbReference type="GO" id="GO:0009570">
    <property type="term" value="C:chloroplast stroma"/>
    <property type="evidence" value="ECO:0007669"/>
    <property type="project" value="UniProtKB-SubCell"/>
</dbReference>
<dbReference type="GO" id="GO:0051539">
    <property type="term" value="F:4 iron, 4 sulfur cluster binding"/>
    <property type="evidence" value="ECO:0000318"/>
    <property type="project" value="GO_Central"/>
</dbReference>
<dbReference type="GO" id="GO:0005524">
    <property type="term" value="F:ATP binding"/>
    <property type="evidence" value="ECO:0007669"/>
    <property type="project" value="UniProtKB-KW"/>
</dbReference>
<dbReference type="GO" id="GO:0140663">
    <property type="term" value="F:ATP-dependent FeS chaperone activity"/>
    <property type="evidence" value="ECO:0007669"/>
    <property type="project" value="InterPro"/>
</dbReference>
<dbReference type="GO" id="GO:0046872">
    <property type="term" value="F:metal ion binding"/>
    <property type="evidence" value="ECO:0007669"/>
    <property type="project" value="UniProtKB-KW"/>
</dbReference>
<dbReference type="GO" id="GO:0016226">
    <property type="term" value="P:iron-sulfur cluster assembly"/>
    <property type="evidence" value="ECO:0000318"/>
    <property type="project" value="GO_Central"/>
</dbReference>
<dbReference type="CDD" id="cd02037">
    <property type="entry name" value="Mrp_NBP35"/>
    <property type="match status" value="1"/>
</dbReference>
<dbReference type="FunFam" id="3.30.300.130:FF:000008">
    <property type="entry name" value="Fe-S cluster assembly factor HCF101, chloroplastic"/>
    <property type="match status" value="1"/>
</dbReference>
<dbReference type="FunFam" id="3.30.2020.30:FF:000001">
    <property type="entry name" value="fe-S cluster assembly factor HCF101, chloroplastic"/>
    <property type="match status" value="1"/>
</dbReference>
<dbReference type="FunFam" id="3.40.50.300:FF:000704">
    <property type="entry name" value="fe-S cluster assembly factor HCF101, chloroplastic"/>
    <property type="match status" value="1"/>
</dbReference>
<dbReference type="Gene3D" id="3.30.2020.30">
    <property type="match status" value="1"/>
</dbReference>
<dbReference type="Gene3D" id="3.30.300.130">
    <property type="entry name" value="Fe-S cluster assembly (FSCA)"/>
    <property type="match status" value="1"/>
</dbReference>
<dbReference type="Gene3D" id="3.40.50.300">
    <property type="entry name" value="P-loop containing nucleotide triphosphate hydrolases"/>
    <property type="match status" value="1"/>
</dbReference>
<dbReference type="HAMAP" id="MF_02040">
    <property type="entry name" value="Mrp_NBP35"/>
    <property type="match status" value="1"/>
</dbReference>
<dbReference type="InterPro" id="IPR034904">
    <property type="entry name" value="FSCA_dom_sf"/>
</dbReference>
<dbReference type="InterPro" id="IPR010376">
    <property type="entry name" value="GBBH-like_N"/>
</dbReference>
<dbReference type="InterPro" id="IPR038492">
    <property type="entry name" value="GBBH-like_N_sf"/>
</dbReference>
<dbReference type="InterPro" id="IPR002744">
    <property type="entry name" value="MIP18-like"/>
</dbReference>
<dbReference type="InterPro" id="IPR000808">
    <property type="entry name" value="Mrp-like_CS"/>
</dbReference>
<dbReference type="InterPro" id="IPR019591">
    <property type="entry name" value="Mrp/NBP35_ATP-bd"/>
</dbReference>
<dbReference type="InterPro" id="IPR044304">
    <property type="entry name" value="NUBPL-like"/>
</dbReference>
<dbReference type="InterPro" id="IPR027417">
    <property type="entry name" value="P-loop_NTPase"/>
</dbReference>
<dbReference type="InterPro" id="IPR033756">
    <property type="entry name" value="YlxH/NBP35"/>
</dbReference>
<dbReference type="PANTHER" id="PTHR42961">
    <property type="entry name" value="IRON-SULFUR PROTEIN NUBPL"/>
    <property type="match status" value="1"/>
</dbReference>
<dbReference type="PANTHER" id="PTHR42961:SF2">
    <property type="entry name" value="IRON-SULFUR PROTEIN NUBPL"/>
    <property type="match status" value="1"/>
</dbReference>
<dbReference type="Pfam" id="PF01883">
    <property type="entry name" value="FeS_assembly_P"/>
    <property type="match status" value="1"/>
</dbReference>
<dbReference type="Pfam" id="PF06155">
    <property type="entry name" value="GBBH-like_N"/>
    <property type="match status" value="1"/>
</dbReference>
<dbReference type="Pfam" id="PF10609">
    <property type="entry name" value="ParA"/>
    <property type="match status" value="1"/>
</dbReference>
<dbReference type="SUPFAM" id="SSF117916">
    <property type="entry name" value="Fe-S cluster assembly (FSCA) domain-like"/>
    <property type="match status" value="1"/>
</dbReference>
<dbReference type="SUPFAM" id="SSF52540">
    <property type="entry name" value="P-loop containing nucleoside triphosphate hydrolases"/>
    <property type="match status" value="1"/>
</dbReference>
<dbReference type="PROSITE" id="PS01215">
    <property type="entry name" value="MRP"/>
    <property type="match status" value="1"/>
</dbReference>
<proteinExistence type="inferred from homology"/>
<feature type="transit peptide" description="Chloroplast" evidence="2">
    <location>
        <begin position="1"/>
        <end position="62"/>
    </location>
</feature>
<feature type="chain" id="PRO_0000430162" description="Fe-S cluster assembly factor HCF101, chloroplastic">
    <location>
        <begin position="63"/>
        <end position="531"/>
    </location>
</feature>
<feature type="region of interest" description="Disordered" evidence="3">
    <location>
        <begin position="17"/>
        <end position="37"/>
    </location>
</feature>
<feature type="compositionally biased region" description="Pro residues" evidence="3">
    <location>
        <begin position="17"/>
        <end position="27"/>
    </location>
</feature>
<feature type="compositionally biased region" description="Low complexity" evidence="3">
    <location>
        <begin position="28"/>
        <end position="37"/>
    </location>
</feature>
<feature type="binding site" evidence="2">
    <location>
        <begin position="181"/>
        <end position="188"/>
    </location>
    <ligand>
        <name>ATP</name>
        <dbReference type="ChEBI" id="CHEBI:30616"/>
    </ligand>
</feature>
<name>HF101_ORYSJ</name>
<accession>Q0JJS8</accession>
<accession>A2ZXA7</accession>
<protein>
    <recommendedName>
        <fullName>Fe-S cluster assembly factor HCF101, chloroplastic</fullName>
    </recommendedName>
    <alternativeName>
        <fullName>Protein HIGH CHLOROPHYLL FLUORESCENCE 101 homolog</fullName>
    </alternativeName>
</protein>
<keyword id="KW-0067">ATP-binding</keyword>
<keyword id="KW-0150">Chloroplast</keyword>
<keyword id="KW-0408">Iron</keyword>
<keyword id="KW-0411">Iron-sulfur</keyword>
<keyword id="KW-0479">Metal-binding</keyword>
<keyword id="KW-0547">Nucleotide-binding</keyword>
<keyword id="KW-0934">Plastid</keyword>
<keyword id="KW-1185">Reference proteome</keyword>
<keyword id="KW-0809">Transit peptide</keyword>
<gene>
    <name type="primary">HCF101</name>
    <name type="ordered locus">Os01g0719700</name>
    <name type="ordered locus">LOC_Os01g52170</name>
    <name type="ORF">OsJ_03276</name>
    <name type="ORF">P0480C01.27</name>
</gene>
<sequence length="531" mass="56922">MRNLRAAAPASFLAPPAPPLLLPPSTPTPRGAFSAKASPAAAAAQAHGWCPSPRRVGRLRRRAGAASSSVASVEDAKKDVLVALSQIIDPDFGTDIVSCGFVKDLEISEALEEVSFRLELTTPACPIKDMFEEKANEVVAALPWVKKVNVTMSAQPARPAYAGELPEGLQKISNIIAVSSCKGGVGKSTVAVNLAYTLAGMGARVGIFDADVFGPSLPTMVSPENRLLVMNPESRSILPTEYLGVKMVSFGFAGQGRAIMRGPMVSGVINQLLTTTDWGELDYLVIDMPPGTGDIHLTLCQVAPLTAAVIVTTPQKLAFIDVAKGVRMFSKLKVPCVAVVENMCYFDADGKRFYPFGQGSGAQVVQQFGIPHLFDLPIRPTLSASGDTGIPEVVADPQGDVAKTFQNLGVCVVQQCAKIRQQVSTAVSYDRSIRAIRVKVPDSDEEFLLHPATVRRNDRSAQSVDEWTGEQKVQYGDIPEDIEPEEIRPMGNYAVSITWPDGFSQIAPYDQLEMLERLVDVPRATTAAVSS</sequence>
<organism>
    <name type="scientific">Oryza sativa subsp. japonica</name>
    <name type="common">Rice</name>
    <dbReference type="NCBI Taxonomy" id="39947"/>
    <lineage>
        <taxon>Eukaryota</taxon>
        <taxon>Viridiplantae</taxon>
        <taxon>Streptophyta</taxon>
        <taxon>Embryophyta</taxon>
        <taxon>Tracheophyta</taxon>
        <taxon>Spermatophyta</taxon>
        <taxon>Magnoliopsida</taxon>
        <taxon>Liliopsida</taxon>
        <taxon>Poales</taxon>
        <taxon>Poaceae</taxon>
        <taxon>BOP clade</taxon>
        <taxon>Oryzoideae</taxon>
        <taxon>Oryzeae</taxon>
        <taxon>Oryzinae</taxon>
        <taxon>Oryza</taxon>
        <taxon>Oryza sativa</taxon>
    </lineage>
</organism>
<reference key="1">
    <citation type="journal article" date="2002" name="Nature">
        <title>The genome sequence and structure of rice chromosome 1.</title>
        <authorList>
            <person name="Sasaki T."/>
            <person name="Matsumoto T."/>
            <person name="Yamamoto K."/>
            <person name="Sakata K."/>
            <person name="Baba T."/>
            <person name="Katayose Y."/>
            <person name="Wu J."/>
            <person name="Niimura Y."/>
            <person name="Cheng Z."/>
            <person name="Nagamura Y."/>
            <person name="Antonio B.A."/>
            <person name="Kanamori H."/>
            <person name="Hosokawa S."/>
            <person name="Masukawa M."/>
            <person name="Arikawa K."/>
            <person name="Chiden Y."/>
            <person name="Hayashi M."/>
            <person name="Okamoto M."/>
            <person name="Ando T."/>
            <person name="Aoki H."/>
            <person name="Arita K."/>
            <person name="Hamada M."/>
            <person name="Harada C."/>
            <person name="Hijishita S."/>
            <person name="Honda M."/>
            <person name="Ichikawa Y."/>
            <person name="Idonuma A."/>
            <person name="Iijima M."/>
            <person name="Ikeda M."/>
            <person name="Ikeno M."/>
            <person name="Ito S."/>
            <person name="Ito T."/>
            <person name="Ito Y."/>
            <person name="Ito Y."/>
            <person name="Iwabuchi A."/>
            <person name="Kamiya K."/>
            <person name="Karasawa W."/>
            <person name="Katagiri S."/>
            <person name="Kikuta A."/>
            <person name="Kobayashi N."/>
            <person name="Kono I."/>
            <person name="Machita K."/>
            <person name="Maehara T."/>
            <person name="Mizuno H."/>
            <person name="Mizubayashi T."/>
            <person name="Mukai Y."/>
            <person name="Nagasaki H."/>
            <person name="Nakashima M."/>
            <person name="Nakama Y."/>
            <person name="Nakamichi Y."/>
            <person name="Nakamura M."/>
            <person name="Namiki N."/>
            <person name="Negishi M."/>
            <person name="Ohta I."/>
            <person name="Ono N."/>
            <person name="Saji S."/>
            <person name="Sakai K."/>
            <person name="Shibata M."/>
            <person name="Shimokawa T."/>
            <person name="Shomura A."/>
            <person name="Song J."/>
            <person name="Takazaki Y."/>
            <person name="Terasawa K."/>
            <person name="Tsuji K."/>
            <person name="Waki K."/>
            <person name="Yamagata H."/>
            <person name="Yamane H."/>
            <person name="Yoshiki S."/>
            <person name="Yoshihara R."/>
            <person name="Yukawa K."/>
            <person name="Zhong H."/>
            <person name="Iwama H."/>
            <person name="Endo T."/>
            <person name="Ito H."/>
            <person name="Hahn J.H."/>
            <person name="Kim H.-I."/>
            <person name="Eun M.-Y."/>
            <person name="Yano M."/>
            <person name="Jiang J."/>
            <person name="Gojobori T."/>
        </authorList>
    </citation>
    <scope>NUCLEOTIDE SEQUENCE [LARGE SCALE GENOMIC DNA]</scope>
    <source>
        <strain>cv. Nipponbare</strain>
    </source>
</reference>
<reference key="2">
    <citation type="journal article" date="2005" name="Nature">
        <title>The map-based sequence of the rice genome.</title>
        <authorList>
            <consortium name="International rice genome sequencing project (IRGSP)"/>
        </authorList>
    </citation>
    <scope>NUCLEOTIDE SEQUENCE [LARGE SCALE GENOMIC DNA]</scope>
    <source>
        <strain>cv. Nipponbare</strain>
    </source>
</reference>
<reference key="3">
    <citation type="journal article" date="2008" name="Nucleic Acids Res.">
        <title>The rice annotation project database (RAP-DB): 2008 update.</title>
        <authorList>
            <consortium name="The rice annotation project (RAP)"/>
        </authorList>
    </citation>
    <scope>GENOME REANNOTATION</scope>
    <source>
        <strain>cv. Nipponbare</strain>
    </source>
</reference>
<reference key="4">
    <citation type="journal article" date="2013" name="Rice">
        <title>Improvement of the Oryza sativa Nipponbare reference genome using next generation sequence and optical map data.</title>
        <authorList>
            <person name="Kawahara Y."/>
            <person name="de la Bastide M."/>
            <person name="Hamilton J.P."/>
            <person name="Kanamori H."/>
            <person name="McCombie W.R."/>
            <person name="Ouyang S."/>
            <person name="Schwartz D.C."/>
            <person name="Tanaka T."/>
            <person name="Wu J."/>
            <person name="Zhou S."/>
            <person name="Childs K.L."/>
            <person name="Davidson R.M."/>
            <person name="Lin H."/>
            <person name="Quesada-Ocampo L."/>
            <person name="Vaillancourt B."/>
            <person name="Sakai H."/>
            <person name="Lee S.S."/>
            <person name="Kim J."/>
            <person name="Numa H."/>
            <person name="Itoh T."/>
            <person name="Buell C.R."/>
            <person name="Matsumoto T."/>
        </authorList>
    </citation>
    <scope>GENOME REANNOTATION</scope>
    <source>
        <strain>cv. Nipponbare</strain>
    </source>
</reference>
<reference key="5">
    <citation type="journal article" date="2005" name="PLoS Biol.">
        <title>The genomes of Oryza sativa: a history of duplications.</title>
        <authorList>
            <person name="Yu J."/>
            <person name="Wang J."/>
            <person name="Lin W."/>
            <person name="Li S."/>
            <person name="Li H."/>
            <person name="Zhou J."/>
            <person name="Ni P."/>
            <person name="Dong W."/>
            <person name="Hu S."/>
            <person name="Zeng C."/>
            <person name="Zhang J."/>
            <person name="Zhang Y."/>
            <person name="Li R."/>
            <person name="Xu Z."/>
            <person name="Li S."/>
            <person name="Li X."/>
            <person name="Zheng H."/>
            <person name="Cong L."/>
            <person name="Lin L."/>
            <person name="Yin J."/>
            <person name="Geng J."/>
            <person name="Li G."/>
            <person name="Shi J."/>
            <person name="Liu J."/>
            <person name="Lv H."/>
            <person name="Li J."/>
            <person name="Wang J."/>
            <person name="Deng Y."/>
            <person name="Ran L."/>
            <person name="Shi X."/>
            <person name="Wang X."/>
            <person name="Wu Q."/>
            <person name="Li C."/>
            <person name="Ren X."/>
            <person name="Wang J."/>
            <person name="Wang X."/>
            <person name="Li D."/>
            <person name="Liu D."/>
            <person name="Zhang X."/>
            <person name="Ji Z."/>
            <person name="Zhao W."/>
            <person name="Sun Y."/>
            <person name="Zhang Z."/>
            <person name="Bao J."/>
            <person name="Han Y."/>
            <person name="Dong L."/>
            <person name="Ji J."/>
            <person name="Chen P."/>
            <person name="Wu S."/>
            <person name="Liu J."/>
            <person name="Xiao Y."/>
            <person name="Bu D."/>
            <person name="Tan J."/>
            <person name="Yang L."/>
            <person name="Ye C."/>
            <person name="Zhang J."/>
            <person name="Xu J."/>
            <person name="Zhou Y."/>
            <person name="Yu Y."/>
            <person name="Zhang B."/>
            <person name="Zhuang S."/>
            <person name="Wei H."/>
            <person name="Liu B."/>
            <person name="Lei M."/>
            <person name="Yu H."/>
            <person name="Li Y."/>
            <person name="Xu H."/>
            <person name="Wei S."/>
            <person name="He X."/>
            <person name="Fang L."/>
            <person name="Zhang Z."/>
            <person name="Zhang Y."/>
            <person name="Huang X."/>
            <person name="Su Z."/>
            <person name="Tong W."/>
            <person name="Li J."/>
            <person name="Tong Z."/>
            <person name="Li S."/>
            <person name="Ye J."/>
            <person name="Wang L."/>
            <person name="Fang L."/>
            <person name="Lei T."/>
            <person name="Chen C.-S."/>
            <person name="Chen H.-C."/>
            <person name="Xu Z."/>
            <person name="Li H."/>
            <person name="Huang H."/>
            <person name="Zhang F."/>
            <person name="Xu H."/>
            <person name="Li N."/>
            <person name="Zhao C."/>
            <person name="Li S."/>
            <person name="Dong L."/>
            <person name="Huang Y."/>
            <person name="Li L."/>
            <person name="Xi Y."/>
            <person name="Qi Q."/>
            <person name="Li W."/>
            <person name="Zhang B."/>
            <person name="Hu W."/>
            <person name="Zhang Y."/>
            <person name="Tian X."/>
            <person name="Jiao Y."/>
            <person name="Liang X."/>
            <person name="Jin J."/>
            <person name="Gao L."/>
            <person name="Zheng W."/>
            <person name="Hao B."/>
            <person name="Liu S.-M."/>
            <person name="Wang W."/>
            <person name="Yuan L."/>
            <person name="Cao M."/>
            <person name="McDermott J."/>
            <person name="Samudrala R."/>
            <person name="Wang J."/>
            <person name="Wong G.K.-S."/>
            <person name="Yang H."/>
        </authorList>
    </citation>
    <scope>NUCLEOTIDE SEQUENCE [LARGE SCALE GENOMIC DNA]</scope>
    <source>
        <strain>cv. Nipponbare</strain>
    </source>
</reference>
<evidence type="ECO:0000250" key="1"/>
<evidence type="ECO:0000255" key="2"/>
<evidence type="ECO:0000256" key="3">
    <source>
        <dbReference type="SAM" id="MobiDB-lite"/>
    </source>
</evidence>
<evidence type="ECO:0000305" key="4"/>
<comment type="function">
    <text evidence="1">Required for photosystem I (PSI) biosynthesis and assembly. May serve as a chloroplast scaffold protein that specifically assembles iron-sulfur (4Fe-4S) clusters and transfers them to the chloroplast PSI and ferredoxin-thioredoxin (FTR) complexes. Probably not required for assembly or stability of plastidic 2Fe-2S clusters (By similarity).</text>
</comment>
<comment type="cofactor">
    <cofactor evidence="1">
        <name>[4Fe-4S] cluster</name>
        <dbReference type="ChEBI" id="CHEBI:49883"/>
    </cofactor>
    <text evidence="1">Binds 1 [4Fe-4S] cluster.</text>
</comment>
<comment type="subcellular location">
    <subcellularLocation>
        <location evidence="1">Plastid</location>
        <location evidence="1">Chloroplast stroma</location>
    </subcellularLocation>
</comment>
<comment type="similarity">
    <text evidence="4">Belongs to the Mrp/NBP35 ATP-binding proteins family.</text>
</comment>
<comment type="sequence caution" evidence="4">
    <conflict type="erroneous gene model prediction">
        <sequence resource="EMBL-CDS" id="BAF06000"/>
    </conflict>
</comment>
<comment type="sequence caution" evidence="4">
    <conflict type="erroneous gene model prediction">
        <sequence resource="EMBL-CDS" id="EAZ13354"/>
    </conflict>
</comment>